<proteinExistence type="inferred from homology"/>
<organism>
    <name type="scientific">Methanothermobacter thermautotrophicus (strain ATCC 29096 / DSM 1053 / JCM 10044 / NBRC 100330 / Delta H)</name>
    <name type="common">Methanobacterium thermoautotrophicum</name>
    <dbReference type="NCBI Taxonomy" id="187420"/>
    <lineage>
        <taxon>Archaea</taxon>
        <taxon>Methanobacteriati</taxon>
        <taxon>Methanobacteriota</taxon>
        <taxon>Methanomada group</taxon>
        <taxon>Methanobacteria</taxon>
        <taxon>Methanobacteriales</taxon>
        <taxon>Methanobacteriaceae</taxon>
        <taxon>Methanothermobacter</taxon>
    </lineage>
</organism>
<feature type="chain" id="PRO_0000142443" description="Adenine deaminase">
    <location>
        <begin position="1"/>
        <end position="538"/>
    </location>
</feature>
<accession>O26952</accession>
<sequence>MISGNILNVFTGDIYPAEIEVAGGRVRCVRSISGNFSDIIIPGFIDAHLHIESSMLIPSSFAAAAIPHGTVSAISDPHEIANVMGVDGVRFMIDDAAATPMKFYFTAPSCVPATPFETAGAEITARGIEELLRMDSVVALGEMMNFPAVIAGDDGVMAKIKAARDLNMPVDGHAPLLSGDELCTYIGAGISTDHECVSPEEVLEKRRLGMKIMAREGSSARNLRDLAAAGCDFLVSDDIHPADLLEGHMDRILRRAVDYGIDPVSAVQMVTINPAEHYGLSTGAIAPGWDADFVVVDSLRDFNVKRVYIDGRPVADRGRYLIRRSGGTRAPPRKLEVPDFPVERLNIRAEGDEATVRVIDVLDGQLITEELIATLEVEDGTVQADTSSDILRVSVLDRYGRGNISSGFVHGFGLQEGAIASTVAHDSHNLIVVGVDPELMKRAVDILKKAGGGLVAVSGDDHRVLQLPVAGLMSDGDVFEVADGFENLNTFTEQLGSRLSAPFMTMSFLSLLVIPRLKIGDRGLFDVEKFEIKNLMEM</sequence>
<reference key="1">
    <citation type="journal article" date="1997" name="J. Bacteriol.">
        <title>Complete genome sequence of Methanobacterium thermoautotrophicum deltaH: functional analysis and comparative genomics.</title>
        <authorList>
            <person name="Smith D.R."/>
            <person name="Doucette-Stamm L.A."/>
            <person name="Deloughery C."/>
            <person name="Lee H.-M."/>
            <person name="Dubois J."/>
            <person name="Aldredge T."/>
            <person name="Bashirzadeh R."/>
            <person name="Blakely D."/>
            <person name="Cook R."/>
            <person name="Gilbert K."/>
            <person name="Harrison D."/>
            <person name="Hoang L."/>
            <person name="Keagle P."/>
            <person name="Lumm W."/>
            <person name="Pothier B."/>
            <person name="Qiu D."/>
            <person name="Spadafora R."/>
            <person name="Vicare R."/>
            <person name="Wang Y."/>
            <person name="Wierzbowski J."/>
            <person name="Gibson R."/>
            <person name="Jiwani N."/>
            <person name="Caruso A."/>
            <person name="Bush D."/>
            <person name="Safer H."/>
            <person name="Patwell D."/>
            <person name="Prabhakar S."/>
            <person name="McDougall S."/>
            <person name="Shimer G."/>
            <person name="Goyal A."/>
            <person name="Pietrovski S."/>
            <person name="Church G.M."/>
            <person name="Daniels C.J."/>
            <person name="Mao J.-I."/>
            <person name="Rice P."/>
            <person name="Noelling J."/>
            <person name="Reeve J.N."/>
        </authorList>
    </citation>
    <scope>NUCLEOTIDE SEQUENCE [LARGE SCALE GENOMIC DNA]</scope>
    <source>
        <strain>ATCC 29096 / DSM 1053 / JCM 10044 / NBRC 100330 / Delta H</strain>
    </source>
</reference>
<gene>
    <name evidence="1" type="primary">ade</name>
    <name type="ordered locus">MTH_866</name>
</gene>
<dbReference type="EC" id="3.5.4.2" evidence="1"/>
<dbReference type="EMBL" id="AE000666">
    <property type="protein sequence ID" value="AAB85364.1"/>
    <property type="molecule type" value="Genomic_DNA"/>
</dbReference>
<dbReference type="PIR" id="F69215">
    <property type="entry name" value="F69215"/>
</dbReference>
<dbReference type="RefSeq" id="WP_010876499.1">
    <property type="nucleotide sequence ID" value="NC_000916.1"/>
</dbReference>
<dbReference type="SMR" id="O26952"/>
<dbReference type="FunCoup" id="O26952">
    <property type="interactions" value="22"/>
</dbReference>
<dbReference type="STRING" id="187420.MTH_866"/>
<dbReference type="PaxDb" id="187420-MTH_866"/>
<dbReference type="EnsemblBacteria" id="AAB85364">
    <property type="protein sequence ID" value="AAB85364"/>
    <property type="gene ID" value="MTH_866"/>
</dbReference>
<dbReference type="GeneID" id="1471274"/>
<dbReference type="GeneID" id="77401400"/>
<dbReference type="KEGG" id="mth:MTH_866"/>
<dbReference type="PATRIC" id="fig|187420.15.peg.850"/>
<dbReference type="HOGENOM" id="CLU_027935_0_0_2"/>
<dbReference type="InParanoid" id="O26952"/>
<dbReference type="Proteomes" id="UP000005223">
    <property type="component" value="Chromosome"/>
</dbReference>
<dbReference type="GO" id="GO:0000034">
    <property type="term" value="F:adenine deaminase activity"/>
    <property type="evidence" value="ECO:0007669"/>
    <property type="project" value="UniProtKB-UniRule"/>
</dbReference>
<dbReference type="GO" id="GO:0006146">
    <property type="term" value="P:adenine catabolic process"/>
    <property type="evidence" value="ECO:0007669"/>
    <property type="project" value="InterPro"/>
</dbReference>
<dbReference type="CDD" id="cd01295">
    <property type="entry name" value="AdeC"/>
    <property type="match status" value="1"/>
</dbReference>
<dbReference type="Gene3D" id="3.20.20.140">
    <property type="entry name" value="Metal-dependent hydrolases"/>
    <property type="match status" value="1"/>
</dbReference>
<dbReference type="Gene3D" id="2.30.40.10">
    <property type="entry name" value="Urease, subunit C, domain 1"/>
    <property type="match status" value="1"/>
</dbReference>
<dbReference type="HAMAP" id="MF_01518">
    <property type="entry name" value="Adenine_deamin"/>
    <property type="match status" value="1"/>
</dbReference>
<dbReference type="InterPro" id="IPR006679">
    <property type="entry name" value="Adenine_deam"/>
</dbReference>
<dbReference type="InterPro" id="IPR026912">
    <property type="entry name" value="Adenine_deam_C"/>
</dbReference>
<dbReference type="InterPro" id="IPR006680">
    <property type="entry name" value="Amidohydro-rel"/>
</dbReference>
<dbReference type="InterPro" id="IPR011059">
    <property type="entry name" value="Metal-dep_hydrolase_composite"/>
</dbReference>
<dbReference type="InterPro" id="IPR032466">
    <property type="entry name" value="Metal_Hydrolase"/>
</dbReference>
<dbReference type="NCBIfam" id="TIGR01178">
    <property type="entry name" value="ade"/>
    <property type="match status" value="1"/>
</dbReference>
<dbReference type="PANTHER" id="PTHR11113:SF2">
    <property type="entry name" value="ADENINE DEAMINASE"/>
    <property type="match status" value="1"/>
</dbReference>
<dbReference type="PANTHER" id="PTHR11113">
    <property type="entry name" value="N-ACETYLGLUCOSAMINE-6-PHOSPHATE DEACETYLASE"/>
    <property type="match status" value="1"/>
</dbReference>
<dbReference type="Pfam" id="PF13382">
    <property type="entry name" value="Adenine_deam_C"/>
    <property type="match status" value="1"/>
</dbReference>
<dbReference type="Pfam" id="PF01979">
    <property type="entry name" value="Amidohydro_1"/>
    <property type="match status" value="1"/>
</dbReference>
<dbReference type="SUPFAM" id="SSF51338">
    <property type="entry name" value="Composite domain of metallo-dependent hydrolases"/>
    <property type="match status" value="1"/>
</dbReference>
<dbReference type="SUPFAM" id="SSF51556">
    <property type="entry name" value="Metallo-dependent hydrolases"/>
    <property type="match status" value="1"/>
</dbReference>
<protein>
    <recommendedName>
        <fullName evidence="1">Adenine deaminase</fullName>
        <shortName evidence="1">Adenase</shortName>
        <shortName evidence="1">Adenine aminase</shortName>
        <ecNumber evidence="1">3.5.4.2</ecNumber>
    </recommendedName>
</protein>
<comment type="catalytic activity">
    <reaction evidence="1">
        <text>adenine + H2O + H(+) = hypoxanthine + NH4(+)</text>
        <dbReference type="Rhea" id="RHEA:23688"/>
        <dbReference type="ChEBI" id="CHEBI:15377"/>
        <dbReference type="ChEBI" id="CHEBI:15378"/>
        <dbReference type="ChEBI" id="CHEBI:16708"/>
        <dbReference type="ChEBI" id="CHEBI:17368"/>
        <dbReference type="ChEBI" id="CHEBI:28938"/>
        <dbReference type="EC" id="3.5.4.2"/>
    </reaction>
</comment>
<comment type="cofactor">
    <cofactor evidence="1">
        <name>Mn(2+)</name>
        <dbReference type="ChEBI" id="CHEBI:29035"/>
    </cofactor>
</comment>
<comment type="similarity">
    <text evidence="1">Belongs to the metallo-dependent hydrolases superfamily. Adenine deaminase family.</text>
</comment>
<keyword id="KW-0378">Hydrolase</keyword>
<keyword id="KW-0464">Manganese</keyword>
<keyword id="KW-1185">Reference proteome</keyword>
<evidence type="ECO:0000255" key="1">
    <source>
        <dbReference type="HAMAP-Rule" id="MF_01518"/>
    </source>
</evidence>
<name>ADEC_METTH</name>